<protein>
    <recommendedName>
        <fullName evidence="10">Protein RseC</fullName>
    </recommendedName>
</protein>
<gene>
    <name evidence="8 9" type="primary">rseC</name>
    <name type="ordered locus">b2570</name>
    <name type="ordered locus">JW2554</name>
</gene>
<proteinExistence type="evidence at protein level"/>
<dbReference type="EMBL" id="U37089">
    <property type="protein sequence ID" value="AAC45317.1"/>
    <property type="molecule type" value="Genomic_DNA"/>
</dbReference>
<dbReference type="EMBL" id="U37455">
    <property type="protein sequence ID" value="AAC45320.1"/>
    <property type="molecule type" value="Genomic_DNA"/>
</dbReference>
<dbReference type="EMBL" id="D64044">
    <property type="protein sequence ID" value="BAA10917.1"/>
    <property type="molecule type" value="Genomic_DNA"/>
</dbReference>
<dbReference type="EMBL" id="U00096">
    <property type="protein sequence ID" value="AAC75623.1"/>
    <property type="molecule type" value="Genomic_DNA"/>
</dbReference>
<dbReference type="EMBL" id="AP009048">
    <property type="protein sequence ID" value="BAE76746.1"/>
    <property type="molecule type" value="Genomic_DNA"/>
</dbReference>
<dbReference type="PIR" id="I83299">
    <property type="entry name" value="I83299"/>
</dbReference>
<dbReference type="RefSeq" id="NP_417065.1">
    <property type="nucleotide sequence ID" value="NC_000913.3"/>
</dbReference>
<dbReference type="RefSeq" id="WP_000589068.1">
    <property type="nucleotide sequence ID" value="NZ_STEB01000011.1"/>
</dbReference>
<dbReference type="SMR" id="P46187"/>
<dbReference type="BioGRID" id="4260599">
    <property type="interactions" value="11"/>
</dbReference>
<dbReference type="FunCoup" id="P46187">
    <property type="interactions" value="27"/>
</dbReference>
<dbReference type="STRING" id="511145.b2570"/>
<dbReference type="PaxDb" id="511145-b2570"/>
<dbReference type="EnsemblBacteria" id="AAC75623">
    <property type="protein sequence ID" value="AAC75623"/>
    <property type="gene ID" value="b2570"/>
</dbReference>
<dbReference type="GeneID" id="947052"/>
<dbReference type="KEGG" id="ecj:JW2554"/>
<dbReference type="KEGG" id="eco:b2570"/>
<dbReference type="KEGG" id="ecoc:C3026_14235"/>
<dbReference type="PATRIC" id="fig|1411691.4.peg.4164"/>
<dbReference type="EchoBASE" id="EB2970"/>
<dbReference type="eggNOG" id="COG3086">
    <property type="taxonomic scope" value="Bacteria"/>
</dbReference>
<dbReference type="HOGENOM" id="CLU_124911_0_0_6"/>
<dbReference type="InParanoid" id="P46187"/>
<dbReference type="OMA" id="KSACNHC"/>
<dbReference type="OrthoDB" id="9795854at2"/>
<dbReference type="PhylomeDB" id="P46187"/>
<dbReference type="BioCyc" id="EcoCyc:G7347-MONOMER"/>
<dbReference type="PRO" id="PR:P46187"/>
<dbReference type="Proteomes" id="UP000000625">
    <property type="component" value="Chromosome"/>
</dbReference>
<dbReference type="GO" id="GO:1990204">
    <property type="term" value="C:oxidoreductase complex"/>
    <property type="evidence" value="ECO:0000314"/>
    <property type="project" value="EcoCyc"/>
</dbReference>
<dbReference type="GO" id="GO:0005886">
    <property type="term" value="C:plasma membrane"/>
    <property type="evidence" value="ECO:0000314"/>
    <property type="project" value="EcoCyc"/>
</dbReference>
<dbReference type="GO" id="GO:0098797">
    <property type="term" value="C:plasma membrane protein complex"/>
    <property type="evidence" value="ECO:0000314"/>
    <property type="project" value="EcoCyc"/>
</dbReference>
<dbReference type="GO" id="GO:0006979">
    <property type="term" value="P:response to oxidative stress"/>
    <property type="evidence" value="ECO:0000315"/>
    <property type="project" value="EcoCyc"/>
</dbReference>
<dbReference type="InterPro" id="IPR026268">
    <property type="entry name" value="RseC"/>
</dbReference>
<dbReference type="InterPro" id="IPR007359">
    <property type="entry name" value="SigmaE_reg_RseC_MucC"/>
</dbReference>
<dbReference type="NCBIfam" id="NF008115">
    <property type="entry name" value="PRK10862.1"/>
    <property type="match status" value="1"/>
</dbReference>
<dbReference type="PANTHER" id="PTHR35867">
    <property type="entry name" value="PROTEIN RSEC"/>
    <property type="match status" value="1"/>
</dbReference>
<dbReference type="PANTHER" id="PTHR35867:SF1">
    <property type="entry name" value="PROTEIN RSEC"/>
    <property type="match status" value="1"/>
</dbReference>
<dbReference type="Pfam" id="PF04246">
    <property type="entry name" value="RseC_MucC"/>
    <property type="match status" value="1"/>
</dbReference>
<dbReference type="PIRSF" id="PIRSF004923">
    <property type="entry name" value="RseC"/>
    <property type="match status" value="1"/>
</dbReference>
<organism>
    <name type="scientific">Escherichia coli (strain K12)</name>
    <dbReference type="NCBI Taxonomy" id="83333"/>
    <lineage>
        <taxon>Bacteria</taxon>
        <taxon>Pseudomonadati</taxon>
        <taxon>Pseudomonadota</taxon>
        <taxon>Gammaproteobacteria</taxon>
        <taxon>Enterobacterales</taxon>
        <taxon>Enterobacteriaceae</taxon>
        <taxon>Escherichia</taxon>
    </lineage>
</organism>
<evidence type="ECO:0000255" key="1"/>
<evidence type="ECO:0000269" key="2">
    <source>
    </source>
</evidence>
<evidence type="ECO:0000269" key="3">
    <source>
    </source>
</evidence>
<evidence type="ECO:0000269" key="4">
    <source>
    </source>
</evidence>
<evidence type="ECO:0000269" key="5">
    <source>
    </source>
</evidence>
<evidence type="ECO:0000269" key="6">
    <source>
    </source>
</evidence>
<evidence type="ECO:0000269" key="7">
    <source>
    </source>
</evidence>
<evidence type="ECO:0000303" key="8">
    <source>
    </source>
</evidence>
<evidence type="ECO:0000303" key="9">
    <source>
    </source>
</evidence>
<evidence type="ECO:0000305" key="10"/>
<evidence type="ECO:0000305" key="11">
    <source>
    </source>
</evidence>
<evidence type="ECO:0000305" key="12">
    <source>
    </source>
</evidence>
<evidence type="ECO:0000305" key="13">
    <source>
    </source>
</evidence>
<evidence type="ECO:0000305" key="14">
    <source>
    </source>
</evidence>
<accession>P46187</accession>
<accession>Q2MAG0</accession>
<name>RSEC_ECOLI</name>
<sequence length="159" mass="16639">MIKEWATVVSWQNGQALVSCDVKASCSSCASRAGCGSRVLNKLGPQTTHTIVVPCDEPLVPGQKVELGIAEGSLLSSALLVYMSPLVGLFLIASLFQLLFASDVAALCGAILGGIGGFLIARGYSRKFAARAEWQPIILSVALPPGLVRFETSSEDASQ</sequence>
<comment type="function">
    <text evidence="2">May play a role in reduction of the SoxR iron-sulfur cluster. May work together with the RsxABCDGE complex.</text>
</comment>
<comment type="subcellular location">
    <subcellularLocation>
        <location evidence="3">Cell inner membrane</location>
        <topology evidence="1">Multi-pass membrane protein</topology>
    </subcellularLocation>
</comment>
<comment type="disruption phenotype">
    <text evidence="2 4 5 6 7">According to PubMed:9159522, insertion mutant shows a modest reduction in sigma-E (rpoE) activity. However, PubMed:9159523 shows that deletion of the gene has no effect on sigma-E activity (PubMed:9159522, PubMed:9159523). Deletion of the gene enhances soxS expression (PubMed:12773378). Mutant shows increased motility and biofilm formation (PubMed:18344336). Deletion mutant is more sensitive than wild-type specifically to hydrogen peroxide exposure, but not other stresses (PubMed:24580753).</text>
</comment>
<comment type="miscellaneous">
    <text evidence="12 13 14">Part of the rseD-rpoE-rseA-rseB-rseC operon (PubMed:28924029, PubMed:9159522, PubMed:9159523).</text>
</comment>
<comment type="similarity">
    <text evidence="10">Belongs to the RseC family.</text>
</comment>
<comment type="caution">
    <text evidence="13">Was originally suggested to positively regulate sigma-E activity in vitro.</text>
</comment>
<reference key="1">
    <citation type="journal article" date="1995" name="EMBO J.">
        <title>The rpoE gene encoding the sigma E (sigma 24) heat shock sigma factor of Escherichia coli.</title>
        <authorList>
            <person name="Raina S."/>
            <person name="Missiakas D."/>
            <person name="Georgopoulos C."/>
        </authorList>
    </citation>
    <scope>NUCLEOTIDE SEQUENCE [GENOMIC DNA]</scope>
    <source>
        <strain>K12 / W3110 / ATCC 27325 / DSM 5911</strain>
    </source>
</reference>
<reference key="2">
    <citation type="journal article" date="1997" name="Mol. Microbiol.">
        <title>The sigmaE-mediated response to extracytoplasmic stress in Escherichia coli is transduced by RseA and RseB, two negative regulators of sigmaE.</title>
        <authorList>
            <person name="De Las Penas A."/>
            <person name="Connolly L."/>
            <person name="Gross C.A."/>
        </authorList>
    </citation>
    <scope>NUCLEOTIDE SEQUENCE [GENOMIC DNA]</scope>
    <scope>OPERON</scope>
    <scope>DISRUPTION PHENOTYPE</scope>
    <source>
        <strain>K12 / MC1061 / ATCC 53338 / DSM 7140</strain>
    </source>
</reference>
<reference key="3">
    <citation type="submission" date="1995-09" db="EMBL/GenBank/DDBJ databases">
        <authorList>
            <person name="Nashimoto H."/>
            <person name="Saito N."/>
        </authorList>
    </citation>
    <scope>NUCLEOTIDE SEQUENCE [GENOMIC DNA]</scope>
    <source>
        <strain>K12 / W3110 / ATCC 27325 / DSM 5911</strain>
    </source>
</reference>
<reference key="4">
    <citation type="journal article" date="1997" name="Science">
        <title>The complete genome sequence of Escherichia coli K-12.</title>
        <authorList>
            <person name="Blattner F.R."/>
            <person name="Plunkett G. III"/>
            <person name="Bloch C.A."/>
            <person name="Perna N.T."/>
            <person name="Burland V."/>
            <person name="Riley M."/>
            <person name="Collado-Vides J."/>
            <person name="Glasner J.D."/>
            <person name="Rode C.K."/>
            <person name="Mayhew G.F."/>
            <person name="Gregor J."/>
            <person name="Davis N.W."/>
            <person name="Kirkpatrick H.A."/>
            <person name="Goeden M.A."/>
            <person name="Rose D.J."/>
            <person name="Mau B."/>
            <person name="Shao Y."/>
        </authorList>
    </citation>
    <scope>NUCLEOTIDE SEQUENCE [LARGE SCALE GENOMIC DNA]</scope>
    <source>
        <strain>K12 / MG1655 / ATCC 47076</strain>
    </source>
</reference>
<reference key="5">
    <citation type="journal article" date="2006" name="Mol. Syst. Biol.">
        <title>Highly accurate genome sequences of Escherichia coli K-12 strains MG1655 and W3110.</title>
        <authorList>
            <person name="Hayashi K."/>
            <person name="Morooka N."/>
            <person name="Yamamoto Y."/>
            <person name="Fujita K."/>
            <person name="Isono K."/>
            <person name="Choi S."/>
            <person name="Ohtsubo E."/>
            <person name="Baba T."/>
            <person name="Wanner B.L."/>
            <person name="Mori H."/>
            <person name="Horiuchi T."/>
        </authorList>
    </citation>
    <scope>NUCLEOTIDE SEQUENCE [LARGE SCALE GENOMIC DNA]</scope>
    <source>
        <strain>K12 / W3110 / ATCC 27325 / DSM 5911</strain>
    </source>
</reference>
<reference key="6">
    <citation type="journal article" date="1997" name="Mol. Microbiol.">
        <title>Modulation of the Escherichia coli sigmaE (RpoE) heat-shock transcription-factor activity by the RseA, RseB and RseC proteins.</title>
        <authorList>
            <person name="Missiakas D."/>
            <person name="Mayer M.P."/>
            <person name="Lemaire M."/>
            <person name="Georgopoulos C."/>
            <person name="Raina S."/>
        </authorList>
    </citation>
    <scope>DISRUPTION PHENOTYPE</scope>
    <scope>OPERON</scope>
    <source>
        <strain>K12 / MC4100 / ATCC 35695 / DSM 6574</strain>
    </source>
</reference>
<reference key="7">
    <citation type="journal article" date="2003" name="EMBO J.">
        <title>A reducing system of the superoxide sensor SoxR in Escherichia coli.</title>
        <authorList>
            <person name="Koo M.S."/>
            <person name="Lee J.H."/>
            <person name="Rah S.Y."/>
            <person name="Yeo W.S."/>
            <person name="Lee J.W."/>
            <person name="Lee K.L."/>
            <person name="Koh Y.S."/>
            <person name="Kang S.O."/>
            <person name="Roe J.H."/>
        </authorList>
    </citation>
    <scope>FUNCTION</scope>
    <scope>DISRUPTION PHENOTYPE</scope>
</reference>
<reference key="8">
    <citation type="journal article" date="2005" name="Science">
        <title>Global topology analysis of the Escherichia coli inner membrane proteome.</title>
        <authorList>
            <person name="Daley D.O."/>
            <person name="Rapp M."/>
            <person name="Granseth E."/>
            <person name="Melen K."/>
            <person name="Drew D."/>
            <person name="von Heijne G."/>
        </authorList>
    </citation>
    <scope>TOPOLOGY [LARGE SCALE ANALYSIS]</scope>
    <scope>SUBCELLULAR LOCATION</scope>
    <source>
        <strain>K12 / MG1655 / ATCC 47076</strain>
    </source>
</reference>
<reference key="9">
    <citation type="journal article" date="2008" name="Appl. Environ. Microbiol.">
        <title>The R1 conjugative plasmid increases Escherichia coli biofilm formation through an envelope stress response.</title>
        <authorList>
            <person name="Yang X."/>
            <person name="Ma Q."/>
            <person name="Wood T.K."/>
        </authorList>
    </citation>
    <scope>DISRUPTION PHENOTYPE</scope>
</reference>
<reference key="10">
    <citation type="journal article" date="2014" name="Genome Biol.">
        <title>Inferring gene function from evolutionary change in signatures of translation efficiency.</title>
        <authorList>
            <person name="Krisko A."/>
            <person name="Copic T."/>
            <person name="Gabaldon T."/>
            <person name="Lehner B."/>
            <person name="Supek F."/>
        </authorList>
    </citation>
    <scope>DISRUPTION PHENOTYPE</scope>
</reference>
<reference key="11">
    <citation type="journal article" date="2017" name="J. Bacteriol.">
        <title>Circuitry linking the global Csr and sigma(E)-dependent cell envelope stress response systems.</title>
        <authorList>
            <person name="Yakhnin H."/>
            <person name="Aichele R."/>
            <person name="Ades S.E."/>
            <person name="Romeo T."/>
            <person name="Babitzke P."/>
        </authorList>
    </citation>
    <scope>OPERON</scope>
    <source>
        <strain>K12 / CF7789</strain>
    </source>
</reference>
<feature type="chain" id="PRO_0000097483" description="Protein RseC">
    <location>
        <begin position="1"/>
        <end position="159"/>
    </location>
</feature>
<feature type="topological domain" description="Cytoplasmic" evidence="11">
    <location>
        <begin position="1"/>
        <end position="72"/>
    </location>
</feature>
<feature type="transmembrane region" description="Helical" evidence="1">
    <location>
        <begin position="73"/>
        <end position="95"/>
    </location>
</feature>
<feature type="topological domain" description="Periplasmic" evidence="11">
    <location>
        <begin position="96"/>
        <end position="98"/>
    </location>
</feature>
<feature type="transmembrane region" description="Helical" evidence="1">
    <location>
        <begin position="99"/>
        <end position="121"/>
    </location>
</feature>
<feature type="topological domain" description="Cytoplasmic" evidence="3">
    <location>
        <begin position="122"/>
        <end position="159"/>
    </location>
</feature>
<keyword id="KW-0997">Cell inner membrane</keyword>
<keyword id="KW-1003">Cell membrane</keyword>
<keyword id="KW-0472">Membrane</keyword>
<keyword id="KW-1185">Reference proteome</keyword>
<keyword id="KW-0812">Transmembrane</keyword>
<keyword id="KW-1133">Transmembrane helix</keyword>